<protein>
    <recommendedName>
        <fullName>Transcriptional regulator MraZ</fullName>
    </recommendedName>
</protein>
<gene>
    <name evidence="1" type="primary">mraZ</name>
    <name type="ordered locus">IL0427</name>
</gene>
<name>MRAZ_IDILO</name>
<keyword id="KW-0963">Cytoplasm</keyword>
<keyword id="KW-0238">DNA-binding</keyword>
<keyword id="KW-1185">Reference proteome</keyword>
<keyword id="KW-0677">Repeat</keyword>
<keyword id="KW-0804">Transcription</keyword>
<keyword id="KW-0805">Transcription regulation</keyword>
<sequence>MFRGATTLSLDSKGRLAIPAKYRHALSLDCEGKMVCTIDIKQPCLLLYPLPEWQIIEQKLTRLSSMNPAERRLQRLLLGHADDCEMDKNGRLLLSAPLRQHAGLEKKLMLVGQLNKFEVWNEDAWHEQVAQDMDVEREGDFTLNERLEDFSL</sequence>
<proteinExistence type="inferred from homology"/>
<feature type="chain" id="PRO_0000108488" description="Transcriptional regulator MraZ">
    <location>
        <begin position="1"/>
        <end position="152"/>
    </location>
</feature>
<feature type="domain" description="SpoVT-AbrB 1" evidence="2">
    <location>
        <begin position="5"/>
        <end position="52"/>
    </location>
</feature>
<feature type="domain" description="SpoVT-AbrB 2" evidence="2">
    <location>
        <begin position="81"/>
        <end position="124"/>
    </location>
</feature>
<organism>
    <name type="scientific">Idiomarina loihiensis (strain ATCC BAA-735 / DSM 15497 / L2-TR)</name>
    <dbReference type="NCBI Taxonomy" id="283942"/>
    <lineage>
        <taxon>Bacteria</taxon>
        <taxon>Pseudomonadati</taxon>
        <taxon>Pseudomonadota</taxon>
        <taxon>Gammaproteobacteria</taxon>
        <taxon>Alteromonadales</taxon>
        <taxon>Idiomarinaceae</taxon>
        <taxon>Idiomarina</taxon>
    </lineage>
</organism>
<accession>Q5R0L8</accession>
<evidence type="ECO:0000255" key="1">
    <source>
        <dbReference type="HAMAP-Rule" id="MF_01008"/>
    </source>
</evidence>
<evidence type="ECO:0000255" key="2">
    <source>
        <dbReference type="PROSITE-ProRule" id="PRU01076"/>
    </source>
</evidence>
<dbReference type="EMBL" id="AE017340">
    <property type="protein sequence ID" value="AAV81270.1"/>
    <property type="molecule type" value="Genomic_DNA"/>
</dbReference>
<dbReference type="RefSeq" id="WP_011233688.1">
    <property type="nucleotide sequence ID" value="NC_006512.1"/>
</dbReference>
<dbReference type="SMR" id="Q5R0L8"/>
<dbReference type="STRING" id="283942.IL0427"/>
<dbReference type="GeneID" id="41335579"/>
<dbReference type="KEGG" id="ilo:IL0427"/>
<dbReference type="eggNOG" id="COG2001">
    <property type="taxonomic scope" value="Bacteria"/>
</dbReference>
<dbReference type="HOGENOM" id="CLU_107907_2_0_6"/>
<dbReference type="OrthoDB" id="9807753at2"/>
<dbReference type="Proteomes" id="UP000001171">
    <property type="component" value="Chromosome"/>
</dbReference>
<dbReference type="GO" id="GO:0005737">
    <property type="term" value="C:cytoplasm"/>
    <property type="evidence" value="ECO:0007669"/>
    <property type="project" value="UniProtKB-UniRule"/>
</dbReference>
<dbReference type="GO" id="GO:0009295">
    <property type="term" value="C:nucleoid"/>
    <property type="evidence" value="ECO:0007669"/>
    <property type="project" value="UniProtKB-SubCell"/>
</dbReference>
<dbReference type="GO" id="GO:0003700">
    <property type="term" value="F:DNA-binding transcription factor activity"/>
    <property type="evidence" value="ECO:0007669"/>
    <property type="project" value="UniProtKB-UniRule"/>
</dbReference>
<dbReference type="GO" id="GO:0000976">
    <property type="term" value="F:transcription cis-regulatory region binding"/>
    <property type="evidence" value="ECO:0007669"/>
    <property type="project" value="TreeGrafter"/>
</dbReference>
<dbReference type="GO" id="GO:2000143">
    <property type="term" value="P:negative regulation of DNA-templated transcription initiation"/>
    <property type="evidence" value="ECO:0007669"/>
    <property type="project" value="TreeGrafter"/>
</dbReference>
<dbReference type="CDD" id="cd16321">
    <property type="entry name" value="MraZ_C"/>
    <property type="match status" value="1"/>
</dbReference>
<dbReference type="CDD" id="cd16320">
    <property type="entry name" value="MraZ_N"/>
    <property type="match status" value="1"/>
</dbReference>
<dbReference type="FunFam" id="3.40.1550.20:FF:000001">
    <property type="entry name" value="Transcriptional regulator MraZ"/>
    <property type="match status" value="1"/>
</dbReference>
<dbReference type="Gene3D" id="3.40.1550.20">
    <property type="entry name" value="Transcriptional regulator MraZ domain"/>
    <property type="match status" value="1"/>
</dbReference>
<dbReference type="HAMAP" id="MF_01008">
    <property type="entry name" value="MraZ"/>
    <property type="match status" value="1"/>
</dbReference>
<dbReference type="InterPro" id="IPR003444">
    <property type="entry name" value="MraZ"/>
</dbReference>
<dbReference type="InterPro" id="IPR035644">
    <property type="entry name" value="MraZ_C"/>
</dbReference>
<dbReference type="InterPro" id="IPR020603">
    <property type="entry name" value="MraZ_dom"/>
</dbReference>
<dbReference type="InterPro" id="IPR035642">
    <property type="entry name" value="MraZ_N"/>
</dbReference>
<dbReference type="InterPro" id="IPR038619">
    <property type="entry name" value="MraZ_sf"/>
</dbReference>
<dbReference type="InterPro" id="IPR007159">
    <property type="entry name" value="SpoVT-AbrB_dom"/>
</dbReference>
<dbReference type="InterPro" id="IPR037914">
    <property type="entry name" value="SpoVT-AbrB_sf"/>
</dbReference>
<dbReference type="NCBIfam" id="TIGR00242">
    <property type="entry name" value="division/cell wall cluster transcriptional repressor MraZ"/>
    <property type="match status" value="1"/>
</dbReference>
<dbReference type="PANTHER" id="PTHR34701">
    <property type="entry name" value="TRANSCRIPTIONAL REGULATOR MRAZ"/>
    <property type="match status" value="1"/>
</dbReference>
<dbReference type="PANTHER" id="PTHR34701:SF1">
    <property type="entry name" value="TRANSCRIPTIONAL REGULATOR MRAZ"/>
    <property type="match status" value="1"/>
</dbReference>
<dbReference type="Pfam" id="PF02381">
    <property type="entry name" value="MraZ"/>
    <property type="match status" value="2"/>
</dbReference>
<dbReference type="SUPFAM" id="SSF89447">
    <property type="entry name" value="AbrB/MazE/MraZ-like"/>
    <property type="match status" value="1"/>
</dbReference>
<dbReference type="PROSITE" id="PS51740">
    <property type="entry name" value="SPOVT_ABRB"/>
    <property type="match status" value="2"/>
</dbReference>
<comment type="subunit">
    <text evidence="1">Forms oligomers.</text>
</comment>
<comment type="subcellular location">
    <subcellularLocation>
        <location evidence="1">Cytoplasm</location>
        <location evidence="1">Nucleoid</location>
    </subcellularLocation>
</comment>
<comment type="similarity">
    <text evidence="1">Belongs to the MraZ family.</text>
</comment>
<reference key="1">
    <citation type="journal article" date="2004" name="Proc. Natl. Acad. Sci. U.S.A.">
        <title>Genome sequence of the deep-sea gamma-proteobacterium Idiomarina loihiensis reveals amino acid fermentation as a source of carbon and energy.</title>
        <authorList>
            <person name="Hou S."/>
            <person name="Saw J.H."/>
            <person name="Lee K.S."/>
            <person name="Freitas T.A."/>
            <person name="Belisle C."/>
            <person name="Kawarabayasi Y."/>
            <person name="Donachie S.P."/>
            <person name="Pikina A."/>
            <person name="Galperin M.Y."/>
            <person name="Koonin E.V."/>
            <person name="Makarova K.S."/>
            <person name="Omelchenko M.V."/>
            <person name="Sorokin A."/>
            <person name="Wolf Y.I."/>
            <person name="Li Q.X."/>
            <person name="Keum Y.S."/>
            <person name="Campbell S."/>
            <person name="Denery J."/>
            <person name="Aizawa S."/>
            <person name="Shibata S."/>
            <person name="Malahoff A."/>
            <person name="Alam M."/>
        </authorList>
    </citation>
    <scope>NUCLEOTIDE SEQUENCE [LARGE SCALE GENOMIC DNA]</scope>
    <source>
        <strain>ATCC BAA-735 / DSM 15497 / L2-TR</strain>
    </source>
</reference>